<proteinExistence type="evidence at transcript level"/>
<accession>P25226</accession>
<sequence>MASSSSPIFLMIIFSMWLLFSYSESTEYLVRDSENSWKVNFPSRDALNRWVTRHQLTIHDTIDVVDEDDCNTEIRSKLGGDFVVTKRPLVLPPLITLPLSPSPAPAPSLSGAAAGHGFIVWLGASLPMLMFLIWL</sequence>
<gene>
    <name type="primary">ENOD5</name>
</gene>
<keyword id="KW-0536">Nodulation</keyword>
<keyword id="KW-0732">Signal</keyword>
<reference key="1">
    <citation type="journal article" date="1990" name="Plant Cell">
        <title>Sequential induction of nodulin gene expression in the developing pea nodule.</title>
        <authorList>
            <person name="Scheres B."/>
            <person name="van Engelen F."/>
            <person name="van der Knaap E."/>
            <person name="van de Wiel C."/>
            <person name="van Kammen A."/>
            <person name="Bisseling T."/>
        </authorList>
    </citation>
    <scope>NUCLEOTIDE SEQUENCE [MRNA]</scope>
    <source>
        <strain>cv. Sparkle</strain>
        <tissue>Root nodule</tissue>
    </source>
</reference>
<feature type="signal peptide" evidence="1">
    <location>
        <begin position="1"/>
        <end position="23"/>
    </location>
</feature>
<feature type="chain" id="PRO_0000002874" description="Early nodulin-5">
    <location>
        <begin position="24"/>
        <end position="135"/>
    </location>
</feature>
<feature type="domain" description="Plastocyanin-like">
    <location>
        <begin position="24"/>
        <end status="unknown"/>
    </location>
</feature>
<protein>
    <recommendedName>
        <fullName>Early nodulin-5</fullName>
        <shortName>N-5</shortName>
    </recommendedName>
</protein>
<name>NO5_PEA</name>
<evidence type="ECO:0000255" key="1"/>
<dbReference type="EMBL" id="S45139">
    <property type="protein sequence ID" value="AAB23536.1"/>
    <property type="molecule type" value="mRNA"/>
</dbReference>
<dbReference type="PIR" id="JQ1084">
    <property type="entry name" value="JQ1084"/>
</dbReference>
<dbReference type="EnsemblPlants" id="Psat0s2403g0080.1">
    <property type="protein sequence ID" value="Psat0s2403g0080.1.cds"/>
    <property type="gene ID" value="Psat0s2403g0080"/>
</dbReference>
<dbReference type="Gramene" id="Psat0s2403g0080.1">
    <property type="protein sequence ID" value="Psat0s2403g0080.1.cds"/>
    <property type="gene ID" value="Psat0s2403g0080"/>
</dbReference>
<dbReference type="OrthoDB" id="1937044at2759"/>
<dbReference type="GO" id="GO:0009877">
    <property type="term" value="P:nodulation"/>
    <property type="evidence" value="ECO:0007669"/>
    <property type="project" value="UniProtKB-KW"/>
</dbReference>
<comment type="function">
    <text>Involved in the infection process during the plant-rhizobium interaction.</text>
</comment>
<comment type="tissue specificity">
    <text>Invasion zone and early symbiotic zone.</text>
</comment>
<comment type="developmental stage">
    <text>Expressed in the second stage of root nodule formation.</text>
</comment>
<organism>
    <name type="scientific">Pisum sativum</name>
    <name type="common">Garden pea</name>
    <name type="synonym">Lathyrus oleraceus</name>
    <dbReference type="NCBI Taxonomy" id="3888"/>
    <lineage>
        <taxon>Eukaryota</taxon>
        <taxon>Viridiplantae</taxon>
        <taxon>Streptophyta</taxon>
        <taxon>Embryophyta</taxon>
        <taxon>Tracheophyta</taxon>
        <taxon>Spermatophyta</taxon>
        <taxon>Magnoliopsida</taxon>
        <taxon>eudicotyledons</taxon>
        <taxon>Gunneridae</taxon>
        <taxon>Pentapetalae</taxon>
        <taxon>rosids</taxon>
        <taxon>fabids</taxon>
        <taxon>Fabales</taxon>
        <taxon>Fabaceae</taxon>
        <taxon>Papilionoideae</taxon>
        <taxon>50 kb inversion clade</taxon>
        <taxon>NPAAA clade</taxon>
        <taxon>Hologalegina</taxon>
        <taxon>IRL clade</taxon>
        <taxon>Fabeae</taxon>
        <taxon>Pisum</taxon>
    </lineage>
</organism>